<gene>
    <name type="primary">atpB</name>
    <name type="ordered locus">CT_307</name>
</gene>
<feature type="chain" id="PRO_0000144676" description="V-type ATP synthase beta chain">
    <location>
        <begin position="1"/>
        <end position="438"/>
    </location>
</feature>
<evidence type="ECO:0000250" key="1"/>
<evidence type="ECO:0000305" key="2"/>
<proteinExistence type="inferred from homology"/>
<comment type="function">
    <text evidence="1">Produces ATP from ADP in the presence of a proton gradient across the membrane. The V-type beta chain is a regulatory subunit (By similarity).</text>
</comment>
<comment type="similarity">
    <text evidence="2">Belongs to the ATPase alpha/beta chains family.</text>
</comment>
<reference key="1">
    <citation type="journal article" date="1998" name="Science">
        <title>Genome sequence of an obligate intracellular pathogen of humans: Chlamydia trachomatis.</title>
        <authorList>
            <person name="Stephens R.S."/>
            <person name="Kalman S."/>
            <person name="Lammel C.J."/>
            <person name="Fan J."/>
            <person name="Marathe R."/>
            <person name="Aravind L."/>
            <person name="Mitchell W.P."/>
            <person name="Olinger L."/>
            <person name="Tatusov R.L."/>
            <person name="Zhao Q."/>
            <person name="Koonin E.V."/>
            <person name="Davis R.W."/>
        </authorList>
    </citation>
    <scope>NUCLEOTIDE SEQUENCE [LARGE SCALE GENOMIC DNA]</scope>
    <source>
        <strain>ATCC VR-885 / DSM 19411 / UW-3/Cx</strain>
    </source>
</reference>
<dbReference type="EMBL" id="AE001273">
    <property type="protein sequence ID" value="AAC67900.1"/>
    <property type="molecule type" value="Genomic_DNA"/>
</dbReference>
<dbReference type="PIR" id="A71531">
    <property type="entry name" value="A71531"/>
</dbReference>
<dbReference type="RefSeq" id="NP_219812.1">
    <property type="nucleotide sequence ID" value="NC_000117.1"/>
</dbReference>
<dbReference type="RefSeq" id="WP_009871654.1">
    <property type="nucleotide sequence ID" value="NC_000117.1"/>
</dbReference>
<dbReference type="SMR" id="O84309"/>
<dbReference type="STRING" id="272561.CT_307"/>
<dbReference type="EnsemblBacteria" id="AAC67900">
    <property type="protein sequence ID" value="AAC67900"/>
    <property type="gene ID" value="CT_307"/>
</dbReference>
<dbReference type="GeneID" id="884817"/>
<dbReference type="KEGG" id="ctr:CT_307"/>
<dbReference type="PATRIC" id="fig|272561.5.peg.328"/>
<dbReference type="HOGENOM" id="CLU_022916_2_0_0"/>
<dbReference type="InParanoid" id="O84309"/>
<dbReference type="OrthoDB" id="9802718at2"/>
<dbReference type="Proteomes" id="UP000000431">
    <property type="component" value="Chromosome"/>
</dbReference>
<dbReference type="GO" id="GO:0005524">
    <property type="term" value="F:ATP binding"/>
    <property type="evidence" value="ECO:0007669"/>
    <property type="project" value="UniProtKB-UniRule"/>
</dbReference>
<dbReference type="GO" id="GO:0046933">
    <property type="term" value="F:proton-transporting ATP synthase activity, rotational mechanism"/>
    <property type="evidence" value="ECO:0007669"/>
    <property type="project" value="UniProtKB-UniRule"/>
</dbReference>
<dbReference type="GO" id="GO:0042777">
    <property type="term" value="P:proton motive force-driven plasma membrane ATP synthesis"/>
    <property type="evidence" value="ECO:0007669"/>
    <property type="project" value="UniProtKB-UniRule"/>
</dbReference>
<dbReference type="CDD" id="cd18118">
    <property type="entry name" value="ATP-synt_V_A-type_beta_N"/>
    <property type="match status" value="1"/>
</dbReference>
<dbReference type="CDD" id="cd01135">
    <property type="entry name" value="V_A-ATPase_B"/>
    <property type="match status" value="1"/>
</dbReference>
<dbReference type="Gene3D" id="3.40.50.12240">
    <property type="match status" value="1"/>
</dbReference>
<dbReference type="HAMAP" id="MF_00310">
    <property type="entry name" value="ATP_synth_B_arch"/>
    <property type="match status" value="1"/>
</dbReference>
<dbReference type="InterPro" id="IPR055190">
    <property type="entry name" value="ATP-synt_VA_C"/>
</dbReference>
<dbReference type="InterPro" id="IPR004100">
    <property type="entry name" value="ATPase_F1/V1/A1_a/bsu_N"/>
</dbReference>
<dbReference type="InterPro" id="IPR000194">
    <property type="entry name" value="ATPase_F1/V1/A1_a/bsu_nucl-bd"/>
</dbReference>
<dbReference type="InterPro" id="IPR027417">
    <property type="entry name" value="P-loop_NTPase"/>
</dbReference>
<dbReference type="InterPro" id="IPR022879">
    <property type="entry name" value="V-ATPase_su_B/beta"/>
</dbReference>
<dbReference type="NCBIfam" id="NF002555">
    <property type="entry name" value="PRK02118.1"/>
    <property type="match status" value="1"/>
</dbReference>
<dbReference type="NCBIfam" id="NF003235">
    <property type="entry name" value="PRK04196.1"/>
    <property type="match status" value="1"/>
</dbReference>
<dbReference type="PANTHER" id="PTHR43389">
    <property type="entry name" value="V-TYPE PROTON ATPASE SUBUNIT B"/>
    <property type="match status" value="1"/>
</dbReference>
<dbReference type="PANTHER" id="PTHR43389:SF4">
    <property type="entry name" value="V-TYPE PROTON ATPASE SUBUNIT B"/>
    <property type="match status" value="1"/>
</dbReference>
<dbReference type="Pfam" id="PF00006">
    <property type="entry name" value="ATP-synt_ab"/>
    <property type="match status" value="1"/>
</dbReference>
<dbReference type="Pfam" id="PF02874">
    <property type="entry name" value="ATP-synt_ab_N"/>
    <property type="match status" value="1"/>
</dbReference>
<dbReference type="Pfam" id="PF22919">
    <property type="entry name" value="ATP-synt_VA_C"/>
    <property type="match status" value="1"/>
</dbReference>
<dbReference type="SUPFAM" id="SSF52540">
    <property type="entry name" value="P-loop containing nucleoside triphosphate hydrolases"/>
    <property type="match status" value="1"/>
</dbReference>
<keyword id="KW-0066">ATP synthesis</keyword>
<keyword id="KW-0375">Hydrogen ion transport</keyword>
<keyword id="KW-0406">Ion transport</keyword>
<keyword id="KW-1185">Reference proteome</keyword>
<keyword id="KW-0813">Transport</keyword>
<name>VATB_CHLTR</name>
<accession>O84309</accession>
<protein>
    <recommendedName>
        <fullName>V-type ATP synthase beta chain</fullName>
    </recommendedName>
    <alternativeName>
        <fullName>V-ATPase subunit B</fullName>
    </alternativeName>
</protein>
<organism>
    <name type="scientific">Chlamydia trachomatis serovar D (strain ATCC VR-885 / DSM 19411 / UW-3/Cx)</name>
    <dbReference type="NCBI Taxonomy" id="272561"/>
    <lineage>
        <taxon>Bacteria</taxon>
        <taxon>Pseudomonadati</taxon>
        <taxon>Chlamydiota</taxon>
        <taxon>Chlamydiia</taxon>
        <taxon>Chlamydiales</taxon>
        <taxon>Chlamydiaceae</taxon>
        <taxon>Chlamydia/Chlamydophila group</taxon>
        <taxon>Chlamydia</taxon>
    </lineage>
</organism>
<sequence length="438" mass="48684">MQTIYTKITDIKGNLITVEAEGASLGELVQIERADGRSSYASVLRFDARKVTLQVFGGTSGLSTGDKVIFLGRPMEVIYGDSLLGRRFNGTGKPIDREDECFGEPIPITTPSFNPVCRIVPREMVRTNIPMIDMFNCLVKSQKIPIFSSSGENHNALLMRIAAQTDADIVIIGGMGLTFVDYNFFVKESQRLGFADKCVMFIHKAVDAPVECVLIPDMALACAERFALEQKKNVLVLLTDMTAFADALKEMAITMDQIPANRGYPGSLYSDLAVRYEKAVDIAQGGSITLISVTTMPGDDITHPVPDNTGFITEGQFYLKDNRIDPFGSLSRLKQLVIGKKTREDHGDLANALIRLYADSRKSAERMSMGFKLSNWDKKLLAFSELFEARLMSLEVNIPLEEALDIGWKILSQSFHSEEVGIKEQLIQKYWPKACLHK</sequence>